<name>MYL4_MOUSE</name>
<organism>
    <name type="scientific">Mus musculus</name>
    <name type="common">Mouse</name>
    <dbReference type="NCBI Taxonomy" id="10090"/>
    <lineage>
        <taxon>Eukaryota</taxon>
        <taxon>Metazoa</taxon>
        <taxon>Chordata</taxon>
        <taxon>Craniata</taxon>
        <taxon>Vertebrata</taxon>
        <taxon>Euteleostomi</taxon>
        <taxon>Mammalia</taxon>
        <taxon>Eutheria</taxon>
        <taxon>Euarchontoglires</taxon>
        <taxon>Glires</taxon>
        <taxon>Rodentia</taxon>
        <taxon>Myomorpha</taxon>
        <taxon>Muroidea</taxon>
        <taxon>Muridae</taxon>
        <taxon>Murinae</taxon>
        <taxon>Mus</taxon>
        <taxon>Mus</taxon>
    </lineage>
</organism>
<reference key="1">
    <citation type="journal article" date="1988" name="J. Biol. Chem.">
        <title>Structure and sequence of the myosin alkali light chain gene expressed in adult cardiac atria and fetal striated muscle.</title>
        <authorList>
            <person name="Barton P.J.R."/>
            <person name="Robert B."/>
            <person name="Cohen A."/>
            <person name="Garner I."/>
            <person name="Sassoon D."/>
            <person name="Weydert A."/>
            <person name="Buckingham M.E."/>
        </authorList>
    </citation>
    <scope>NUCLEOTIDE SEQUENCE [GENOMIC DNA / MRNA]</scope>
    <source>
        <strain>C3H/HeJ</strain>
    </source>
</reference>
<reference key="2">
    <citation type="journal article" date="1988" name="Nucleic Acids Res.">
        <title>Promoter analysis of myosin alkali light chain genes expressed in mouse striated muscle.</title>
        <authorList>
            <person name="Cohen A."/>
            <person name="Barton P.J.R."/>
            <person name="Robert B."/>
            <person name="Garner I."/>
            <person name="Alonso S."/>
            <person name="Buckingham M.E."/>
        </authorList>
    </citation>
    <scope>NUCLEOTIDE SEQUENCE [GENOMIC DNA] OF 1-41</scope>
    <source>
        <strain>C3H/HeJ</strain>
    </source>
</reference>
<reference key="3">
    <citation type="journal article" date="2010" name="Cell">
        <title>A tissue-specific atlas of mouse protein phosphorylation and expression.</title>
        <authorList>
            <person name="Huttlin E.L."/>
            <person name="Jedrychowski M.P."/>
            <person name="Elias J.E."/>
            <person name="Goswami T."/>
            <person name="Rad R."/>
            <person name="Beausoleil S.A."/>
            <person name="Villen J."/>
            <person name="Haas W."/>
            <person name="Sowa M.E."/>
            <person name="Gygi S.P."/>
        </authorList>
    </citation>
    <scope>IDENTIFICATION BY MASS SPECTROMETRY [LARGE SCALE ANALYSIS]</scope>
    <source>
        <tissue>Heart</tissue>
        <tissue>Lung</tissue>
        <tissue>Spleen</tissue>
        <tissue>Testis</tissue>
    </source>
</reference>
<protein>
    <recommendedName>
        <fullName>Myosin light chain 4</fullName>
    </recommendedName>
    <alternativeName>
        <fullName>MLC1EMB</fullName>
    </alternativeName>
    <alternativeName>
        <fullName>Myosin light chain 1, atrial/fetal isoform</fullName>
        <shortName>MLC1A</shortName>
    </alternativeName>
</protein>
<dbReference type="EMBL" id="M20772">
    <property type="protein sequence ID" value="AAA39721.1"/>
    <property type="molecule type" value="Genomic_DNA"/>
</dbReference>
<dbReference type="EMBL" id="M31017">
    <property type="protein sequence ID" value="AAA39721.1"/>
    <property type="status" value="JOINED"/>
    <property type="molecule type" value="Genomic_DNA"/>
</dbReference>
<dbReference type="EMBL" id="M20769">
    <property type="protein sequence ID" value="AAA39721.1"/>
    <property type="status" value="JOINED"/>
    <property type="molecule type" value="Genomic_DNA"/>
</dbReference>
<dbReference type="EMBL" id="M20770">
    <property type="protein sequence ID" value="AAA39721.1"/>
    <property type="status" value="JOINED"/>
    <property type="molecule type" value="Genomic_DNA"/>
</dbReference>
<dbReference type="EMBL" id="M20771">
    <property type="protein sequence ID" value="AAA39721.1"/>
    <property type="status" value="JOINED"/>
    <property type="molecule type" value="Genomic_DNA"/>
</dbReference>
<dbReference type="EMBL" id="M19436">
    <property type="protein sequence ID" value="AAA39720.1"/>
    <property type="molecule type" value="mRNA"/>
</dbReference>
<dbReference type="EMBL" id="X12971">
    <property type="protein sequence ID" value="CAA31414.1"/>
    <property type="molecule type" value="Genomic_DNA"/>
</dbReference>
<dbReference type="CCDS" id="CCDS25535.1"/>
<dbReference type="PIR" id="A31114">
    <property type="entry name" value="MOMS4E"/>
</dbReference>
<dbReference type="SMR" id="P09541"/>
<dbReference type="FunCoup" id="P09541">
    <property type="interactions" value="229"/>
</dbReference>
<dbReference type="IntAct" id="P09541">
    <property type="interactions" value="2"/>
</dbReference>
<dbReference type="MINT" id="P09541"/>
<dbReference type="STRING" id="10090.ENSMUSP00000102570"/>
<dbReference type="GlyGen" id="P09541">
    <property type="glycosylation" value="1 site, 1 O-linked glycan (1 site)"/>
</dbReference>
<dbReference type="iPTMnet" id="P09541"/>
<dbReference type="PhosphoSitePlus" id="P09541"/>
<dbReference type="jPOST" id="P09541"/>
<dbReference type="PaxDb" id="10090-ENSMUSP00000018800"/>
<dbReference type="PeptideAtlas" id="P09541"/>
<dbReference type="ProteomicsDB" id="287531"/>
<dbReference type="AGR" id="MGI:97267"/>
<dbReference type="MGI" id="MGI:97267">
    <property type="gene designation" value="Myl4"/>
</dbReference>
<dbReference type="eggNOG" id="KOG0030">
    <property type="taxonomic scope" value="Eukaryota"/>
</dbReference>
<dbReference type="InParanoid" id="P09541"/>
<dbReference type="PhylomeDB" id="P09541"/>
<dbReference type="Reactome" id="R-MMU-390522">
    <property type="pathway name" value="Striated Muscle Contraction"/>
</dbReference>
<dbReference type="ChiTaRS" id="Myl4">
    <property type="organism name" value="mouse"/>
</dbReference>
<dbReference type="PRO" id="PR:P09541"/>
<dbReference type="Proteomes" id="UP000000589">
    <property type="component" value="Unplaced"/>
</dbReference>
<dbReference type="RNAct" id="P09541">
    <property type="molecule type" value="protein"/>
</dbReference>
<dbReference type="GO" id="GO:0016459">
    <property type="term" value="C:myosin complex"/>
    <property type="evidence" value="ECO:0007669"/>
    <property type="project" value="UniProtKB-KW"/>
</dbReference>
<dbReference type="GO" id="GO:0005509">
    <property type="term" value="F:calcium ion binding"/>
    <property type="evidence" value="ECO:0007669"/>
    <property type="project" value="InterPro"/>
</dbReference>
<dbReference type="CDD" id="cd00051">
    <property type="entry name" value="EFh"/>
    <property type="match status" value="1"/>
</dbReference>
<dbReference type="FunFam" id="1.10.238.10:FF:000019">
    <property type="entry name" value="Myosin light chain 1 skeletal"/>
    <property type="match status" value="1"/>
</dbReference>
<dbReference type="FunFam" id="1.10.238.10:FF:000056">
    <property type="entry name" value="Myosin light chain 1 skeletal"/>
    <property type="match status" value="1"/>
</dbReference>
<dbReference type="Gene3D" id="1.10.238.10">
    <property type="entry name" value="EF-hand"/>
    <property type="match status" value="2"/>
</dbReference>
<dbReference type="InterPro" id="IPR050230">
    <property type="entry name" value="CALM/Myosin/TropC-like"/>
</dbReference>
<dbReference type="InterPro" id="IPR011992">
    <property type="entry name" value="EF-hand-dom_pair"/>
</dbReference>
<dbReference type="InterPro" id="IPR002048">
    <property type="entry name" value="EF_hand_dom"/>
</dbReference>
<dbReference type="PANTHER" id="PTHR23048">
    <property type="entry name" value="MYOSIN LIGHT CHAIN 1, 3"/>
    <property type="match status" value="1"/>
</dbReference>
<dbReference type="PANTHER" id="PTHR23048:SF1">
    <property type="entry name" value="MYOSIN LIGHT CHAIN 4"/>
    <property type="match status" value="1"/>
</dbReference>
<dbReference type="SUPFAM" id="SSF47473">
    <property type="entry name" value="EF-hand"/>
    <property type="match status" value="1"/>
</dbReference>
<dbReference type="PROSITE" id="PS50222">
    <property type="entry name" value="EF_HAND_2"/>
    <property type="match status" value="2"/>
</dbReference>
<comment type="function">
    <text evidence="4">Regulatory light chain of myosin. Does not bind calcium.</text>
</comment>
<comment type="subunit">
    <text>Myosin is a hexamer of 2 heavy chains and 4 light chains.</text>
</comment>
<comment type="tissue specificity">
    <text>Expressed in atrial muscle and in fetal skeletal and ventricular muscle.</text>
</comment>
<keyword id="KW-0488">Methylation</keyword>
<keyword id="KW-0505">Motor protein</keyword>
<keyword id="KW-0514">Muscle protein</keyword>
<keyword id="KW-0518">Myosin</keyword>
<keyword id="KW-1185">Reference proteome</keyword>
<keyword id="KW-0677">Repeat</keyword>
<feature type="initiator methionine" description="Removed" evidence="1">
    <location>
        <position position="1"/>
    </location>
</feature>
<feature type="chain" id="PRO_0000198700" description="Myosin light chain 4">
    <location>
        <begin position="2"/>
        <end position="193"/>
    </location>
</feature>
<feature type="domain" description="EF-hand 1" evidence="2">
    <location>
        <begin position="47"/>
        <end position="84"/>
    </location>
</feature>
<feature type="domain" description="EF-hand 2" evidence="2">
    <location>
        <begin position="126"/>
        <end position="161"/>
    </location>
</feature>
<feature type="region of interest" description="Disordered" evidence="3">
    <location>
        <begin position="1"/>
        <end position="37"/>
    </location>
</feature>
<feature type="compositionally biased region" description="Basic and acidic residues" evidence="3">
    <location>
        <begin position="1"/>
        <end position="13"/>
    </location>
</feature>
<feature type="compositionally biased region" description="Low complexity" evidence="3">
    <location>
        <begin position="14"/>
        <end position="28"/>
    </location>
</feature>
<feature type="modified residue" description="N,N-dimethylproline" evidence="1">
    <location>
        <position position="2"/>
    </location>
</feature>
<accession>P09541</accession>
<proteinExistence type="evidence at protein level"/>
<sequence length="193" mass="21159">MPPKKPEPKKEAAKPAAAPAPAASAAPEPLKDSAFDPKSVKIDFSADQIEEFKEAFSLFDRTPTGEMKITYGQCGDVLRALGQNPTNAEVLRVLGKPKPEEMSSKTLDFEMFLPILQHISRNKEQGTYEDFVEGLRVFDKESNGTVMGAELRHVLATLGEKMSEAEVEQLLSGQEDANGCINYEAFVKHIMSG</sequence>
<evidence type="ECO:0000250" key="1">
    <source>
        <dbReference type="UniProtKB" id="F1RRT2"/>
    </source>
</evidence>
<evidence type="ECO:0000255" key="2">
    <source>
        <dbReference type="PROSITE-ProRule" id="PRU00448"/>
    </source>
</evidence>
<evidence type="ECO:0000256" key="3">
    <source>
        <dbReference type="SAM" id="MobiDB-lite"/>
    </source>
</evidence>
<evidence type="ECO:0000305" key="4"/>
<gene>
    <name type="primary">Myl4</name>
    <name type="synonym">Mlc1a</name>
    <name type="synonym">Myla</name>
</gene>